<feature type="transit peptide" description="Chloroplast" evidence="1">
    <location>
        <begin position="1"/>
        <end position="53"/>
    </location>
</feature>
<feature type="chain" id="PRO_0000431817" description="NAD(P)H-quinone oxidoreductase subunit U, chloroplastic" evidence="1">
    <location>
        <begin position="54"/>
        <end position="218"/>
    </location>
</feature>
<feature type="transmembrane region" description="Helical" evidence="1">
    <location>
        <begin position="197"/>
        <end position="217"/>
    </location>
</feature>
<feature type="domain" description="J" evidence="2">
    <location>
        <begin position="95"/>
        <end position="159"/>
    </location>
</feature>
<feature type="region of interest" description="Disordered" evidence="3">
    <location>
        <begin position="47"/>
        <end position="72"/>
    </location>
</feature>
<feature type="splice variant" id="VSP_057442" description="In isoform 2.">
    <location>
        <position position="141"/>
    </location>
</feature>
<evidence type="ECO:0000255" key="1"/>
<evidence type="ECO:0000255" key="2">
    <source>
        <dbReference type="PROSITE-ProRule" id="PRU00286"/>
    </source>
</evidence>
<evidence type="ECO:0000256" key="3">
    <source>
        <dbReference type="SAM" id="MobiDB-lite"/>
    </source>
</evidence>
<evidence type="ECO:0000269" key="4">
    <source>
    </source>
</evidence>
<evidence type="ECO:0000269" key="5">
    <source>
    </source>
</evidence>
<evidence type="ECO:0000269" key="6">
    <source>
    </source>
</evidence>
<evidence type="ECO:0000303" key="7">
    <source>
    </source>
</evidence>
<evidence type="ECO:0000303" key="8">
    <source>
    </source>
</evidence>
<evidence type="ECO:0000305" key="9"/>
<evidence type="ECO:0000312" key="10">
    <source>
        <dbReference type="Araport" id="AT5G21430"/>
    </source>
</evidence>
<evidence type="ECO:0000312" key="11">
    <source>
        <dbReference type="EMBL" id="AAO73883.1"/>
    </source>
</evidence>
<evidence type="ECO:0000312" key="12">
    <source>
        <dbReference type="Proteomes" id="UP000006548"/>
    </source>
</evidence>
<name>NDHU_ARATH</name>
<gene>
    <name evidence="8" type="primary">ndhU</name>
    <name evidence="7" type="synonym">CRRL</name>
    <name evidence="10" type="ordered locus">At5g21430</name>
    <name evidence="11" type="ORF">F13M11.2</name>
</gene>
<sequence>MASLSTITQPSLVHIPGESVLHHVPSTCSFPWKPTINTKRIICSPARNSSEVSAEAETEGGSSTAVDEAPKESPSLISALNVERALRGLPITDVDHYGRLGIFRNCSYDQVTIGYKERVKELKEQGLDEEQLKTKMDLIKESYTILSTVEERRMYDWSLARSEKAERYVWPFEVDIMEPSREEPPPQEPEDVGPTRILGYFIGAWLVLGVALSVAFNR</sequence>
<organism evidence="12">
    <name type="scientific">Arabidopsis thaliana</name>
    <name type="common">Mouse-ear cress</name>
    <dbReference type="NCBI Taxonomy" id="3702"/>
    <lineage>
        <taxon>Eukaryota</taxon>
        <taxon>Viridiplantae</taxon>
        <taxon>Streptophyta</taxon>
        <taxon>Embryophyta</taxon>
        <taxon>Tracheophyta</taxon>
        <taxon>Spermatophyta</taxon>
        <taxon>Magnoliopsida</taxon>
        <taxon>eudicotyledons</taxon>
        <taxon>Gunneridae</taxon>
        <taxon>Pentapetalae</taxon>
        <taxon>rosids</taxon>
        <taxon>malvids</taxon>
        <taxon>Brassicales</taxon>
        <taxon>Brassicaceae</taxon>
        <taxon>Camelineae</taxon>
        <taxon>Arabidopsis</taxon>
    </lineage>
</organism>
<protein>
    <recommendedName>
        <fullName evidence="9">NAD(P)H-quinone oxidoreductase subunit U, chloroplastic</fullName>
        <ecNumber evidence="9">7.1.1.-</ecNumber>
    </recommendedName>
    <alternativeName>
        <fullName evidence="8">NAD(P)H dehydrogenase subunit U</fullName>
        <shortName evidence="9">NDH subunit U</shortName>
    </alternativeName>
    <alternativeName>
        <fullName evidence="9">NADH-plastoquinone oxidoreductase subunit U</fullName>
    </alternativeName>
    <alternativeName>
        <fullName evidence="7">Protein CHLORORESPIRATORY REDUCTION L</fullName>
    </alternativeName>
</protein>
<comment type="function">
    <text evidence="9">NDH shuttles electrons from NAD(P)H:plastoquinone, via FMN and iron-sulfur (Fe-S) centers, to quinones in the photosynthetic chain and possibly in a chloroplast respiratory chain. The immediate electron acceptor for the enzyme in this species is believed to be plastoquinone. Couples the redox reaction to proton translocation, and thus conserves the redox energy in a proton gradient.</text>
</comment>
<comment type="catalytic activity">
    <reaction evidence="9">
        <text>a plastoquinone + NADH + (n+1) H(+)(in) = a plastoquinol + NAD(+) + n H(+)(out)</text>
        <dbReference type="Rhea" id="RHEA:42608"/>
        <dbReference type="Rhea" id="RHEA-COMP:9561"/>
        <dbReference type="Rhea" id="RHEA-COMP:9562"/>
        <dbReference type="ChEBI" id="CHEBI:15378"/>
        <dbReference type="ChEBI" id="CHEBI:17757"/>
        <dbReference type="ChEBI" id="CHEBI:57540"/>
        <dbReference type="ChEBI" id="CHEBI:57945"/>
        <dbReference type="ChEBI" id="CHEBI:62192"/>
    </reaction>
</comment>
<comment type="catalytic activity">
    <reaction evidence="9">
        <text>a plastoquinone + NADPH + (n+1) H(+)(in) = a plastoquinol + NADP(+) + n H(+)(out)</text>
        <dbReference type="Rhea" id="RHEA:42612"/>
        <dbReference type="Rhea" id="RHEA-COMP:9561"/>
        <dbReference type="Rhea" id="RHEA-COMP:9562"/>
        <dbReference type="ChEBI" id="CHEBI:15378"/>
        <dbReference type="ChEBI" id="CHEBI:17757"/>
        <dbReference type="ChEBI" id="CHEBI:57783"/>
        <dbReference type="ChEBI" id="CHEBI:58349"/>
        <dbReference type="ChEBI" id="CHEBI:62192"/>
    </reaction>
</comment>
<comment type="subunit">
    <text evidence="4 5 6">Part of the chloroplast NDH complex, composed of a mixture of chloroplast and nucleus encoded subunits (PubMed:21785130). Component of the electron donor-binding subcomplex, at least composed of NDHS, NDHT and NDHU (PubMed:21505067, PubMed:24225949).</text>
</comment>
<comment type="subcellular location">
    <subcellularLocation>
        <location evidence="4">Plastid</location>
        <location evidence="4">Chloroplast thylakoid membrane</location>
        <topology evidence="1">Single-pass membrane protein</topology>
    </subcellularLocation>
</comment>
<comment type="alternative products">
    <event type="alternative splicing"/>
    <isoform>
        <id>Q84VQ4-1</id>
        <name>1</name>
        <sequence type="displayed"/>
    </isoform>
    <isoform>
        <id>Q84VQ4-2</id>
        <name>2</name>
        <sequence type="described" ref="VSP_057442"/>
    </isoform>
</comment>
<comment type="disruption phenotype">
    <text evidence="4">Malfunction of the NDH complex.</text>
</comment>
<accession>Q84VQ4</accession>
<accession>Q63Z93</accession>
<dbReference type="EC" id="7.1.1.-" evidence="9"/>
<dbReference type="EMBL" id="AC140977">
    <property type="protein sequence ID" value="AAO73883.1"/>
    <property type="molecule type" value="Genomic_DNA"/>
</dbReference>
<dbReference type="EMBL" id="CP002688">
    <property type="protein sequence ID" value="AED92949.1"/>
    <property type="molecule type" value="Genomic_DNA"/>
</dbReference>
<dbReference type="EMBL" id="CP002688">
    <property type="protein sequence ID" value="AED92950.1"/>
    <property type="molecule type" value="Genomic_DNA"/>
</dbReference>
<dbReference type="EMBL" id="AY091157">
    <property type="status" value="NOT_ANNOTATED_CDS"/>
    <property type="molecule type" value="mRNA"/>
</dbReference>
<dbReference type="EMBL" id="BT015681">
    <property type="protein sequence ID" value="AAU15180.1"/>
    <property type="molecule type" value="mRNA"/>
</dbReference>
<dbReference type="RefSeq" id="NP_001031919.1">
    <molecule id="Q84VQ4-2"/>
    <property type="nucleotide sequence ID" value="NM_001036842.1"/>
</dbReference>
<dbReference type="RefSeq" id="NP_850862.1">
    <molecule id="Q84VQ4-1"/>
    <property type="nucleotide sequence ID" value="NM_180531.4"/>
</dbReference>
<dbReference type="SMR" id="Q84VQ4"/>
<dbReference type="FunCoup" id="Q84VQ4">
    <property type="interactions" value="890"/>
</dbReference>
<dbReference type="STRING" id="3702.Q84VQ4"/>
<dbReference type="PaxDb" id="3702-AT5G21430.1"/>
<dbReference type="ProteomicsDB" id="251168">
    <molecule id="Q84VQ4-1"/>
</dbReference>
<dbReference type="EnsemblPlants" id="AT5G21430.1">
    <molecule id="Q84VQ4-1"/>
    <property type="protein sequence ID" value="AT5G21430.1"/>
    <property type="gene ID" value="AT5G21430"/>
</dbReference>
<dbReference type="EnsemblPlants" id="AT5G21430.2">
    <molecule id="Q84VQ4-2"/>
    <property type="protein sequence ID" value="AT5G21430.2"/>
    <property type="gene ID" value="AT5G21430"/>
</dbReference>
<dbReference type="GeneID" id="832247"/>
<dbReference type="Gramene" id="AT5G21430.1">
    <molecule id="Q84VQ4-1"/>
    <property type="protein sequence ID" value="AT5G21430.1"/>
    <property type="gene ID" value="AT5G21430"/>
</dbReference>
<dbReference type="Gramene" id="AT5G21430.2">
    <molecule id="Q84VQ4-2"/>
    <property type="protein sequence ID" value="AT5G21430.2"/>
    <property type="gene ID" value="AT5G21430"/>
</dbReference>
<dbReference type="KEGG" id="ath:AT5G21430"/>
<dbReference type="Araport" id="AT5G21430"/>
<dbReference type="TAIR" id="AT5G21430">
    <property type="gene designation" value="NDHU"/>
</dbReference>
<dbReference type="eggNOG" id="ENOG502RXG6">
    <property type="taxonomic scope" value="Eukaryota"/>
</dbReference>
<dbReference type="HOGENOM" id="CLU_103116_0_0_1"/>
<dbReference type="InParanoid" id="Q84VQ4"/>
<dbReference type="OMA" id="PRNCSYD"/>
<dbReference type="OrthoDB" id="2013770at2759"/>
<dbReference type="PhylomeDB" id="Q84VQ4"/>
<dbReference type="PRO" id="PR:Q84VQ4"/>
<dbReference type="Proteomes" id="UP000006548">
    <property type="component" value="Chromosome 5"/>
</dbReference>
<dbReference type="ExpressionAtlas" id="Q84VQ4">
    <property type="expression patterns" value="baseline and differential"/>
</dbReference>
<dbReference type="GO" id="GO:0009507">
    <property type="term" value="C:chloroplast"/>
    <property type="evidence" value="ECO:0007005"/>
    <property type="project" value="TAIR"/>
</dbReference>
<dbReference type="GO" id="GO:0009535">
    <property type="term" value="C:chloroplast thylakoid membrane"/>
    <property type="evidence" value="ECO:0000315"/>
    <property type="project" value="UniProtKB"/>
</dbReference>
<dbReference type="GO" id="GO:0010598">
    <property type="term" value="C:NAD(P)H dehydrogenase complex (plastoquinone)"/>
    <property type="evidence" value="ECO:0000315"/>
    <property type="project" value="UniProtKB"/>
</dbReference>
<dbReference type="GO" id="GO:0009536">
    <property type="term" value="C:plastid"/>
    <property type="evidence" value="ECO:0007005"/>
    <property type="project" value="TAIR"/>
</dbReference>
<dbReference type="GO" id="GO:0048038">
    <property type="term" value="F:quinone binding"/>
    <property type="evidence" value="ECO:0007669"/>
    <property type="project" value="UniProtKB-KW"/>
</dbReference>
<dbReference type="FunFam" id="1.10.287.110:FF:000080">
    <property type="entry name" value="NAD(P)H-quinone oxidoreductase subunit U chloroplastic"/>
    <property type="match status" value="1"/>
</dbReference>
<dbReference type="Gene3D" id="1.10.287.110">
    <property type="entry name" value="DnaJ domain"/>
    <property type="match status" value="1"/>
</dbReference>
<dbReference type="InterPro" id="IPR036869">
    <property type="entry name" value="J_dom_sf"/>
</dbReference>
<dbReference type="InterPro" id="IPR044199">
    <property type="entry name" value="NdhU_chloroplastic"/>
</dbReference>
<dbReference type="PANTHER" id="PTHR47726">
    <property type="entry name" value="NAD(P)H-QUINONE OXIDOREDUCTASE SUBUNIT U, CHLOROPLASTIC"/>
    <property type="match status" value="1"/>
</dbReference>
<dbReference type="PANTHER" id="PTHR47726:SF1">
    <property type="entry name" value="NAD(P)H-QUINONE OXIDOREDUCTASE SUBUNIT U, CHLOROPLASTIC"/>
    <property type="match status" value="1"/>
</dbReference>
<dbReference type="SUPFAM" id="SSF46565">
    <property type="entry name" value="Chaperone J-domain"/>
    <property type="match status" value="1"/>
</dbReference>
<reference key="1">
    <citation type="journal article" date="2000" name="Nature">
        <title>Sequence and analysis of chromosome 5 of the plant Arabidopsis thaliana.</title>
        <authorList>
            <person name="Tabata S."/>
            <person name="Kaneko T."/>
            <person name="Nakamura Y."/>
            <person name="Kotani H."/>
            <person name="Kato T."/>
            <person name="Asamizu E."/>
            <person name="Miyajima N."/>
            <person name="Sasamoto S."/>
            <person name="Kimura T."/>
            <person name="Hosouchi T."/>
            <person name="Kawashima K."/>
            <person name="Kohara M."/>
            <person name="Matsumoto M."/>
            <person name="Matsuno A."/>
            <person name="Muraki A."/>
            <person name="Nakayama S."/>
            <person name="Nakazaki N."/>
            <person name="Naruo K."/>
            <person name="Okumura S."/>
            <person name="Shinpo S."/>
            <person name="Takeuchi C."/>
            <person name="Wada T."/>
            <person name="Watanabe A."/>
            <person name="Yamada M."/>
            <person name="Yasuda M."/>
            <person name="Sato S."/>
            <person name="de la Bastide M."/>
            <person name="Huang E."/>
            <person name="Spiegel L."/>
            <person name="Gnoj L."/>
            <person name="O'Shaughnessy A."/>
            <person name="Preston R."/>
            <person name="Habermann K."/>
            <person name="Murray J."/>
            <person name="Johnson D."/>
            <person name="Rohlfing T."/>
            <person name="Nelson J."/>
            <person name="Stoneking T."/>
            <person name="Pepin K."/>
            <person name="Spieth J."/>
            <person name="Sekhon M."/>
            <person name="Armstrong J."/>
            <person name="Becker M."/>
            <person name="Belter E."/>
            <person name="Cordum H."/>
            <person name="Cordes M."/>
            <person name="Courtney L."/>
            <person name="Courtney W."/>
            <person name="Dante M."/>
            <person name="Du H."/>
            <person name="Edwards J."/>
            <person name="Fryman J."/>
            <person name="Haakensen B."/>
            <person name="Lamar E."/>
            <person name="Latreille P."/>
            <person name="Leonard S."/>
            <person name="Meyer R."/>
            <person name="Mulvaney E."/>
            <person name="Ozersky P."/>
            <person name="Riley A."/>
            <person name="Strowmatt C."/>
            <person name="Wagner-McPherson C."/>
            <person name="Wollam A."/>
            <person name="Yoakum M."/>
            <person name="Bell M."/>
            <person name="Dedhia N."/>
            <person name="Parnell L."/>
            <person name="Shah R."/>
            <person name="Rodriguez M."/>
            <person name="Hoon See L."/>
            <person name="Vil D."/>
            <person name="Baker J."/>
            <person name="Kirchoff K."/>
            <person name="Toth K."/>
            <person name="King L."/>
            <person name="Bahret A."/>
            <person name="Miller B."/>
            <person name="Marra M.A."/>
            <person name="Martienssen R."/>
            <person name="McCombie W.R."/>
            <person name="Wilson R.K."/>
            <person name="Murphy G."/>
            <person name="Bancroft I."/>
            <person name="Volckaert G."/>
            <person name="Wambutt R."/>
            <person name="Duesterhoeft A."/>
            <person name="Stiekema W."/>
            <person name="Pohl T."/>
            <person name="Entian K.-D."/>
            <person name="Terryn N."/>
            <person name="Hartley N."/>
            <person name="Bent E."/>
            <person name="Johnson S."/>
            <person name="Langham S.-A."/>
            <person name="McCullagh B."/>
            <person name="Robben J."/>
            <person name="Grymonprez B."/>
            <person name="Zimmermann W."/>
            <person name="Ramsperger U."/>
            <person name="Wedler H."/>
            <person name="Balke K."/>
            <person name="Wedler E."/>
            <person name="Peters S."/>
            <person name="van Staveren M."/>
            <person name="Dirkse W."/>
            <person name="Mooijman P."/>
            <person name="Klein Lankhorst R."/>
            <person name="Weitzenegger T."/>
            <person name="Bothe G."/>
            <person name="Rose M."/>
            <person name="Hauf J."/>
            <person name="Berneiser S."/>
            <person name="Hempel S."/>
            <person name="Feldpausch M."/>
            <person name="Lamberth S."/>
            <person name="Villarroel R."/>
            <person name="Gielen J."/>
            <person name="Ardiles W."/>
            <person name="Bents O."/>
            <person name="Lemcke K."/>
            <person name="Kolesov G."/>
            <person name="Mayer K.F.X."/>
            <person name="Rudd S."/>
            <person name="Schoof H."/>
            <person name="Schueller C."/>
            <person name="Zaccaria P."/>
            <person name="Mewes H.-W."/>
            <person name="Bevan M."/>
            <person name="Fransz P.F."/>
        </authorList>
    </citation>
    <scope>NUCLEOTIDE SEQUENCE [LARGE SCALE GENOMIC DNA]</scope>
    <source>
        <strain>cv. Columbia</strain>
    </source>
</reference>
<reference key="2">
    <citation type="journal article" date="2017" name="Plant J.">
        <title>Araport11: a complete reannotation of the Arabidopsis thaliana reference genome.</title>
        <authorList>
            <person name="Cheng C.Y."/>
            <person name="Krishnakumar V."/>
            <person name="Chan A.P."/>
            <person name="Thibaud-Nissen F."/>
            <person name="Schobel S."/>
            <person name="Town C.D."/>
        </authorList>
    </citation>
    <scope>GENOME REANNOTATION</scope>
    <source>
        <strain>cv. Columbia</strain>
    </source>
</reference>
<reference key="3">
    <citation type="journal article" date="2003" name="Science">
        <title>Empirical analysis of transcriptional activity in the Arabidopsis genome.</title>
        <authorList>
            <person name="Yamada K."/>
            <person name="Lim J."/>
            <person name="Dale J.M."/>
            <person name="Chen H."/>
            <person name="Shinn P."/>
            <person name="Palm C.J."/>
            <person name="Southwick A.M."/>
            <person name="Wu H.C."/>
            <person name="Kim C.J."/>
            <person name="Nguyen M."/>
            <person name="Pham P.K."/>
            <person name="Cheuk R.F."/>
            <person name="Karlin-Newmann G."/>
            <person name="Liu S.X."/>
            <person name="Lam B."/>
            <person name="Sakano H."/>
            <person name="Wu T."/>
            <person name="Yu G."/>
            <person name="Miranda M."/>
            <person name="Quach H.L."/>
            <person name="Tripp M."/>
            <person name="Chang C.H."/>
            <person name="Lee J.M."/>
            <person name="Toriumi M.J."/>
            <person name="Chan M.M."/>
            <person name="Tang C.C."/>
            <person name="Onodera C.S."/>
            <person name="Deng J.M."/>
            <person name="Akiyama K."/>
            <person name="Ansari Y."/>
            <person name="Arakawa T."/>
            <person name="Banh J."/>
            <person name="Banno F."/>
            <person name="Bowser L."/>
            <person name="Brooks S.Y."/>
            <person name="Carninci P."/>
            <person name="Chao Q."/>
            <person name="Choy N."/>
            <person name="Enju A."/>
            <person name="Goldsmith A.D."/>
            <person name="Gurjal M."/>
            <person name="Hansen N.F."/>
            <person name="Hayashizaki Y."/>
            <person name="Johnson-Hopson C."/>
            <person name="Hsuan V.W."/>
            <person name="Iida K."/>
            <person name="Karnes M."/>
            <person name="Khan S."/>
            <person name="Koesema E."/>
            <person name="Ishida J."/>
            <person name="Jiang P.X."/>
            <person name="Jones T."/>
            <person name="Kawai J."/>
            <person name="Kamiya A."/>
            <person name="Meyers C."/>
            <person name="Nakajima M."/>
            <person name="Narusaka M."/>
            <person name="Seki M."/>
            <person name="Sakurai T."/>
            <person name="Satou M."/>
            <person name="Tamse R."/>
            <person name="Vaysberg M."/>
            <person name="Wallender E.K."/>
            <person name="Wong C."/>
            <person name="Yamamura Y."/>
            <person name="Yuan S."/>
            <person name="Shinozaki K."/>
            <person name="Davis R.W."/>
            <person name="Theologis A."/>
            <person name="Ecker J.R."/>
        </authorList>
    </citation>
    <scope>NUCLEOTIDE SEQUENCE [LARGE SCALE MRNA] (ISOFORM 1)</scope>
    <source>
        <strain>cv. Columbia</strain>
    </source>
</reference>
<reference key="4">
    <citation type="submission" date="2004-09" db="EMBL/GenBank/DDBJ databases">
        <title>Arabidopsis ORF clones.</title>
        <authorList>
            <person name="Cheuk R.F."/>
            <person name="Chen H."/>
            <person name="Kim C.J."/>
            <person name="Shinn P."/>
            <person name="Ecker J.R."/>
        </authorList>
    </citation>
    <scope>NUCLEOTIDE SEQUENCE [LARGE SCALE MRNA] (ISOFORM 2)</scope>
    <source>
        <strain>cv. Columbia</strain>
    </source>
</reference>
<reference key="5">
    <citation type="journal article" date="2011" name="Plant Cell">
        <title>An Src homology 3 domain-like fold protein forms a ferredoxin binding site for the chloroplast NADH dehydrogenase-like complex in Arabidopsis.</title>
        <authorList>
            <person name="Yamamoto H."/>
            <person name="Peng L."/>
            <person name="Fukao Y."/>
            <person name="Shikanai T."/>
        </authorList>
    </citation>
    <scope>COMPONENT OF THE NDH COMPLEX</scope>
    <scope>DISRUPTION PHENOTYPE</scope>
    <scope>SUBCELLULAR LOCATION</scope>
</reference>
<reference key="6">
    <citation type="journal article" date="2011" name="Plant Cell Physiol.">
        <title>Structure of the chloroplast NADH dehydrogenase-like complex: nomenclature for nuclear-encoded subunits.</title>
        <authorList>
            <person name="Ifuku K."/>
            <person name="Endo T."/>
            <person name="Shikanai T."/>
            <person name="Aro E.M."/>
        </authorList>
    </citation>
    <scope>NOMENCLATURE</scope>
    <scope>COMPONENT OF THE NDH COMPLEX</scope>
</reference>
<reference key="7">
    <citation type="journal article" date="2013" name="J. Biol. Chem.">
        <title>In planta mutagenesis of Src homology 3 domain-like fold of NdhS, a ferredoxin-binding subunit of the chloroplast NADH dehydrogenase-like complex in Arabidopsis: a conserved Arg-193 plays a critical role in ferredoxin binding.</title>
        <authorList>
            <person name="Yamamoto H."/>
            <person name="Shikanai T."/>
        </authorList>
    </citation>
    <scope>COMPONENT OF THE NDH COMPLEX</scope>
    <scope>SUBUNIT</scope>
</reference>
<proteinExistence type="evidence at protein level"/>
<keyword id="KW-0025">Alternative splicing</keyword>
<keyword id="KW-0150">Chloroplast</keyword>
<keyword id="KW-0472">Membrane</keyword>
<keyword id="KW-0520">NAD</keyword>
<keyword id="KW-0521">NADP</keyword>
<keyword id="KW-0934">Plastid</keyword>
<keyword id="KW-0618">Plastoquinone</keyword>
<keyword id="KW-0874">Quinone</keyword>
<keyword id="KW-1185">Reference proteome</keyword>
<keyword id="KW-0793">Thylakoid</keyword>
<keyword id="KW-0809">Transit peptide</keyword>
<keyword id="KW-1278">Translocase</keyword>
<keyword id="KW-0812">Transmembrane</keyword>
<keyword id="KW-1133">Transmembrane helix</keyword>
<keyword id="KW-0813">Transport</keyword>